<evidence type="ECO:0000255" key="1">
    <source>
        <dbReference type="HAMAP-Rule" id="MF_01846"/>
    </source>
</evidence>
<name>NUDI_ECO24</name>
<gene>
    <name evidence="1" type="primary">nudI</name>
    <name type="ordered locus">EcE24377A_2546</name>
</gene>
<accession>A7ZP69</accession>
<comment type="function">
    <text evidence="1">Catalyzes the hydrolysis of nucleoside triphosphates, with a preference for pyrimidine deoxynucleoside triphosphates (dUTP, dTTP and dCTP).</text>
</comment>
<comment type="catalytic activity">
    <reaction evidence="1">
        <text>a ribonucleoside 5'-triphosphate + H2O = a ribonucleoside 5'-phosphate + diphosphate + H(+)</text>
        <dbReference type="Rhea" id="RHEA:23996"/>
        <dbReference type="ChEBI" id="CHEBI:15377"/>
        <dbReference type="ChEBI" id="CHEBI:15378"/>
        <dbReference type="ChEBI" id="CHEBI:33019"/>
        <dbReference type="ChEBI" id="CHEBI:58043"/>
        <dbReference type="ChEBI" id="CHEBI:61557"/>
        <dbReference type="EC" id="3.6.1.9"/>
    </reaction>
</comment>
<comment type="catalytic activity">
    <reaction evidence="1">
        <text>a 2'-deoxyribonucleoside 5'-triphosphate + H2O = a 2'-deoxyribonucleoside 5'-phosphate + diphosphate + H(+)</text>
        <dbReference type="Rhea" id="RHEA:44644"/>
        <dbReference type="ChEBI" id="CHEBI:15377"/>
        <dbReference type="ChEBI" id="CHEBI:15378"/>
        <dbReference type="ChEBI" id="CHEBI:33019"/>
        <dbReference type="ChEBI" id="CHEBI:61560"/>
        <dbReference type="ChEBI" id="CHEBI:65317"/>
        <dbReference type="EC" id="3.6.1.9"/>
    </reaction>
</comment>
<comment type="catalytic activity">
    <reaction evidence="1">
        <text>dUTP + H2O = dUMP + diphosphate + H(+)</text>
        <dbReference type="Rhea" id="RHEA:10248"/>
        <dbReference type="ChEBI" id="CHEBI:15377"/>
        <dbReference type="ChEBI" id="CHEBI:15378"/>
        <dbReference type="ChEBI" id="CHEBI:33019"/>
        <dbReference type="ChEBI" id="CHEBI:61555"/>
        <dbReference type="ChEBI" id="CHEBI:246422"/>
        <dbReference type="EC" id="3.6.1.9"/>
    </reaction>
</comment>
<comment type="catalytic activity">
    <reaction evidence="1">
        <text>dUTP + H2O = dUMP + diphosphate + H(+)</text>
        <dbReference type="Rhea" id="RHEA:10248"/>
        <dbReference type="ChEBI" id="CHEBI:15377"/>
        <dbReference type="ChEBI" id="CHEBI:15378"/>
        <dbReference type="ChEBI" id="CHEBI:33019"/>
        <dbReference type="ChEBI" id="CHEBI:61555"/>
        <dbReference type="ChEBI" id="CHEBI:246422"/>
        <dbReference type="EC" id="3.6.1.23"/>
    </reaction>
</comment>
<comment type="catalytic activity">
    <reaction evidence="1">
        <text>dTTP + H2O = dTMP + diphosphate + H(+)</text>
        <dbReference type="Rhea" id="RHEA:28534"/>
        <dbReference type="ChEBI" id="CHEBI:15377"/>
        <dbReference type="ChEBI" id="CHEBI:15378"/>
        <dbReference type="ChEBI" id="CHEBI:33019"/>
        <dbReference type="ChEBI" id="CHEBI:37568"/>
        <dbReference type="ChEBI" id="CHEBI:63528"/>
        <dbReference type="EC" id="3.6.1.9"/>
    </reaction>
</comment>
<comment type="catalytic activity">
    <reaction evidence="1">
        <text>dCTP + H2O = dCMP + diphosphate + H(+)</text>
        <dbReference type="Rhea" id="RHEA:22636"/>
        <dbReference type="ChEBI" id="CHEBI:15377"/>
        <dbReference type="ChEBI" id="CHEBI:15378"/>
        <dbReference type="ChEBI" id="CHEBI:33019"/>
        <dbReference type="ChEBI" id="CHEBI:57566"/>
        <dbReference type="ChEBI" id="CHEBI:61481"/>
        <dbReference type="EC" id="3.6.1.9"/>
    </reaction>
</comment>
<comment type="catalytic activity">
    <reaction evidence="1">
        <text>dCTP + H2O = dCMP + diphosphate + H(+)</text>
        <dbReference type="Rhea" id="RHEA:22636"/>
        <dbReference type="ChEBI" id="CHEBI:15377"/>
        <dbReference type="ChEBI" id="CHEBI:15378"/>
        <dbReference type="ChEBI" id="CHEBI:33019"/>
        <dbReference type="ChEBI" id="CHEBI:57566"/>
        <dbReference type="ChEBI" id="CHEBI:61481"/>
        <dbReference type="EC" id="3.6.1.12"/>
    </reaction>
</comment>
<comment type="cofactor">
    <cofactor evidence="1">
        <name>Mg(2+)</name>
        <dbReference type="ChEBI" id="CHEBI:18420"/>
    </cofactor>
</comment>
<comment type="subunit">
    <text evidence="1">Monomer.</text>
</comment>
<comment type="similarity">
    <text evidence="1">Belongs to the Nudix hydrolase family. NudI subfamily.</text>
</comment>
<protein>
    <recommendedName>
        <fullName evidence="1">Nucleoside triphosphatase NudI</fullName>
        <ecNumber evidence="1">3.6.1.9</ecNumber>
    </recommendedName>
    <alternativeName>
        <fullName evidence="1">Nucleotide diphosphatase NudI</fullName>
    </alternativeName>
    <alternativeName>
        <fullName evidence="1">Pyrimidine deoxynucleoside triphosphate diphosphatase</fullName>
    </alternativeName>
    <alternativeName>
        <fullName evidence="1">dCTP diphosphatase</fullName>
        <ecNumber evidence="1">3.6.1.12</ecNumber>
    </alternativeName>
    <alternativeName>
        <fullName evidence="1">dTTP diphosphatase</fullName>
        <ecNumber evidence="1">3.6.1.-</ecNumber>
    </alternativeName>
    <alternativeName>
        <fullName evidence="1">dUTP diphosphatase</fullName>
        <ecNumber evidence="1">3.6.1.23</ecNumber>
    </alternativeName>
</protein>
<sequence length="141" mass="16361">MRQRTIVCPLIQNDGAYLLCKMADDRGVFPGQWALSGGGVESGERIEEALRREIREELGEQLLLTEITPWTFSDDIRTKTYADGRKEEIYMIYLIFDCVSANREVKINEEFQDYAWVKPEDLVHYDLNVATRKTLRLKGLL</sequence>
<dbReference type="EC" id="3.6.1.9" evidence="1"/>
<dbReference type="EC" id="3.6.1.12" evidence="1"/>
<dbReference type="EC" id="3.6.1.-" evidence="1"/>
<dbReference type="EC" id="3.6.1.23" evidence="1"/>
<dbReference type="EMBL" id="CP000800">
    <property type="protein sequence ID" value="ABV18674.1"/>
    <property type="molecule type" value="Genomic_DNA"/>
</dbReference>
<dbReference type="RefSeq" id="WP_001249889.1">
    <property type="nucleotide sequence ID" value="NC_009801.1"/>
</dbReference>
<dbReference type="SMR" id="A7ZP69"/>
<dbReference type="GeneID" id="93774923"/>
<dbReference type="KEGG" id="ecw:EcE24377A_2546"/>
<dbReference type="HOGENOM" id="CLU_037162_31_0_6"/>
<dbReference type="Proteomes" id="UP000001122">
    <property type="component" value="Chromosome"/>
</dbReference>
<dbReference type="GO" id="GO:0047840">
    <property type="term" value="F:dCTP diphosphatase activity"/>
    <property type="evidence" value="ECO:0007669"/>
    <property type="project" value="UniProtKB-EC"/>
</dbReference>
<dbReference type="GO" id="GO:0036218">
    <property type="term" value="F:dTTP diphosphatase activity"/>
    <property type="evidence" value="ECO:0007669"/>
    <property type="project" value="RHEA"/>
</dbReference>
<dbReference type="GO" id="GO:0004170">
    <property type="term" value="F:dUTP diphosphatase activity"/>
    <property type="evidence" value="ECO:0007669"/>
    <property type="project" value="UniProtKB-EC"/>
</dbReference>
<dbReference type="GO" id="GO:0000287">
    <property type="term" value="F:magnesium ion binding"/>
    <property type="evidence" value="ECO:0007669"/>
    <property type="project" value="UniProtKB-UniRule"/>
</dbReference>
<dbReference type="FunFam" id="3.90.79.10:FF:000039">
    <property type="entry name" value="Nucleoside triphosphatase NudI"/>
    <property type="match status" value="1"/>
</dbReference>
<dbReference type="Gene3D" id="3.90.79.10">
    <property type="entry name" value="Nucleoside Triphosphate Pyrophosphohydrolase"/>
    <property type="match status" value="1"/>
</dbReference>
<dbReference type="HAMAP" id="MF_01846">
    <property type="entry name" value="Nudix_NudI"/>
    <property type="match status" value="1"/>
</dbReference>
<dbReference type="InterPro" id="IPR023781">
    <property type="entry name" value="Nucleoside_triphosphatase_NudI"/>
</dbReference>
<dbReference type="InterPro" id="IPR020476">
    <property type="entry name" value="Nudix_hydrolase"/>
</dbReference>
<dbReference type="InterPro" id="IPR015797">
    <property type="entry name" value="NUDIX_hydrolase-like_dom_sf"/>
</dbReference>
<dbReference type="InterPro" id="IPR020084">
    <property type="entry name" value="NUDIX_hydrolase_CS"/>
</dbReference>
<dbReference type="InterPro" id="IPR000086">
    <property type="entry name" value="NUDIX_hydrolase_dom"/>
</dbReference>
<dbReference type="NCBIfam" id="NF012016">
    <property type="entry name" value="PRK15472.1"/>
    <property type="match status" value="1"/>
</dbReference>
<dbReference type="PANTHER" id="PTHR43046">
    <property type="entry name" value="GDP-MANNOSE MANNOSYL HYDROLASE"/>
    <property type="match status" value="1"/>
</dbReference>
<dbReference type="PANTHER" id="PTHR43046:SF14">
    <property type="entry name" value="MUTT_NUDIX FAMILY PROTEIN"/>
    <property type="match status" value="1"/>
</dbReference>
<dbReference type="Pfam" id="PF00293">
    <property type="entry name" value="NUDIX"/>
    <property type="match status" value="1"/>
</dbReference>
<dbReference type="PRINTS" id="PR00502">
    <property type="entry name" value="NUDIXFAMILY"/>
</dbReference>
<dbReference type="SUPFAM" id="SSF55811">
    <property type="entry name" value="Nudix"/>
    <property type="match status" value="1"/>
</dbReference>
<dbReference type="PROSITE" id="PS51462">
    <property type="entry name" value="NUDIX"/>
    <property type="match status" value="1"/>
</dbReference>
<dbReference type="PROSITE" id="PS00893">
    <property type="entry name" value="NUDIX_BOX"/>
    <property type="match status" value="1"/>
</dbReference>
<reference key="1">
    <citation type="journal article" date="2008" name="J. Bacteriol.">
        <title>The pangenome structure of Escherichia coli: comparative genomic analysis of E. coli commensal and pathogenic isolates.</title>
        <authorList>
            <person name="Rasko D.A."/>
            <person name="Rosovitz M.J."/>
            <person name="Myers G.S.A."/>
            <person name="Mongodin E.F."/>
            <person name="Fricke W.F."/>
            <person name="Gajer P."/>
            <person name="Crabtree J."/>
            <person name="Sebaihia M."/>
            <person name="Thomson N.R."/>
            <person name="Chaudhuri R."/>
            <person name="Henderson I.R."/>
            <person name="Sperandio V."/>
            <person name="Ravel J."/>
        </authorList>
    </citation>
    <scope>NUCLEOTIDE SEQUENCE [LARGE SCALE GENOMIC DNA]</scope>
    <source>
        <strain>E24377A / ETEC</strain>
    </source>
</reference>
<keyword id="KW-0378">Hydrolase</keyword>
<keyword id="KW-0460">Magnesium</keyword>
<keyword id="KW-1185">Reference proteome</keyword>
<proteinExistence type="inferred from homology"/>
<feature type="chain" id="PRO_0000342128" description="Nucleoside triphosphatase NudI">
    <location>
        <begin position="1"/>
        <end position="141"/>
    </location>
</feature>
<feature type="domain" description="Nudix hydrolase" evidence="1">
    <location>
        <begin position="1"/>
        <end position="141"/>
    </location>
</feature>
<feature type="short sequence motif" description="Nudix box">
    <location>
        <begin position="38"/>
        <end position="59"/>
    </location>
</feature>
<organism>
    <name type="scientific">Escherichia coli O139:H28 (strain E24377A / ETEC)</name>
    <dbReference type="NCBI Taxonomy" id="331111"/>
    <lineage>
        <taxon>Bacteria</taxon>
        <taxon>Pseudomonadati</taxon>
        <taxon>Pseudomonadota</taxon>
        <taxon>Gammaproteobacteria</taxon>
        <taxon>Enterobacterales</taxon>
        <taxon>Enterobacteriaceae</taxon>
        <taxon>Escherichia</taxon>
    </lineage>
</organism>